<evidence type="ECO:0000255" key="1">
    <source>
        <dbReference type="HAMAP-Rule" id="MF_00382"/>
    </source>
</evidence>
<evidence type="ECO:0000305" key="2"/>
<gene>
    <name evidence="1" type="primary">rplT</name>
    <name type="ordered locus">DMR_10620</name>
</gene>
<organism>
    <name type="scientific">Solidesulfovibrio magneticus (strain ATCC 700980 / DSM 13731 / RS-1)</name>
    <name type="common">Desulfovibrio magneticus</name>
    <dbReference type="NCBI Taxonomy" id="573370"/>
    <lineage>
        <taxon>Bacteria</taxon>
        <taxon>Pseudomonadati</taxon>
        <taxon>Thermodesulfobacteriota</taxon>
        <taxon>Desulfovibrionia</taxon>
        <taxon>Desulfovibrionales</taxon>
        <taxon>Desulfovibrionaceae</taxon>
        <taxon>Solidesulfovibrio</taxon>
    </lineage>
</organism>
<comment type="function">
    <text evidence="1">Binds directly to 23S ribosomal RNA and is necessary for the in vitro assembly process of the 50S ribosomal subunit. It is not involved in the protein synthesizing functions of that subunit.</text>
</comment>
<comment type="similarity">
    <text evidence="1">Belongs to the bacterial ribosomal protein bL20 family.</text>
</comment>
<reference key="1">
    <citation type="journal article" date="2009" name="Genome Res.">
        <title>Whole genome sequence of Desulfovibrio magneticus strain RS-1 revealed common gene clusters in magnetotactic bacteria.</title>
        <authorList>
            <person name="Nakazawa H."/>
            <person name="Arakaki A."/>
            <person name="Narita-Yamada S."/>
            <person name="Yashiro I."/>
            <person name="Jinno K."/>
            <person name="Aoki N."/>
            <person name="Tsuruyama A."/>
            <person name="Okamura Y."/>
            <person name="Tanikawa S."/>
            <person name="Fujita N."/>
            <person name="Takeyama H."/>
            <person name="Matsunaga T."/>
        </authorList>
    </citation>
    <scope>NUCLEOTIDE SEQUENCE [LARGE SCALE GENOMIC DNA]</scope>
    <source>
        <strain>ATCC 700980 / DSM 13731 / RS-1</strain>
    </source>
</reference>
<accession>C4XL14</accession>
<keyword id="KW-0687">Ribonucleoprotein</keyword>
<keyword id="KW-0689">Ribosomal protein</keyword>
<keyword id="KW-0694">RNA-binding</keyword>
<keyword id="KW-0699">rRNA-binding</keyword>
<name>RL20_SOLM1</name>
<feature type="chain" id="PRO_1000205709" description="Large ribosomal subunit protein bL20">
    <location>
        <begin position="1"/>
        <end position="117"/>
    </location>
</feature>
<sequence length="117" mass="13594">MRVKRGQAAHKRHKKFLKMAKGYVGARSKLYETAREVAERSLVYAYRDRKQRKRQMRKLWILRINAAARENGLSYSVFMHGLTVAGVELDRKVLADMAVREKDSFQKLAELVKSKVA</sequence>
<dbReference type="EMBL" id="AP010904">
    <property type="protein sequence ID" value="BAH74553.1"/>
    <property type="molecule type" value="Genomic_DNA"/>
</dbReference>
<dbReference type="RefSeq" id="WP_015859782.1">
    <property type="nucleotide sequence ID" value="NC_012796.1"/>
</dbReference>
<dbReference type="SMR" id="C4XL14"/>
<dbReference type="STRING" id="573370.DMR_10620"/>
<dbReference type="KEGG" id="dma:DMR_10620"/>
<dbReference type="eggNOG" id="COG0292">
    <property type="taxonomic scope" value="Bacteria"/>
</dbReference>
<dbReference type="HOGENOM" id="CLU_123265_0_1_7"/>
<dbReference type="OrthoDB" id="9808966at2"/>
<dbReference type="Proteomes" id="UP000009071">
    <property type="component" value="Chromosome"/>
</dbReference>
<dbReference type="GO" id="GO:1990904">
    <property type="term" value="C:ribonucleoprotein complex"/>
    <property type="evidence" value="ECO:0007669"/>
    <property type="project" value="UniProtKB-KW"/>
</dbReference>
<dbReference type="GO" id="GO:0005840">
    <property type="term" value="C:ribosome"/>
    <property type="evidence" value="ECO:0007669"/>
    <property type="project" value="UniProtKB-KW"/>
</dbReference>
<dbReference type="GO" id="GO:0019843">
    <property type="term" value="F:rRNA binding"/>
    <property type="evidence" value="ECO:0007669"/>
    <property type="project" value="UniProtKB-UniRule"/>
</dbReference>
<dbReference type="GO" id="GO:0003735">
    <property type="term" value="F:structural constituent of ribosome"/>
    <property type="evidence" value="ECO:0007669"/>
    <property type="project" value="InterPro"/>
</dbReference>
<dbReference type="GO" id="GO:0000027">
    <property type="term" value="P:ribosomal large subunit assembly"/>
    <property type="evidence" value="ECO:0007669"/>
    <property type="project" value="UniProtKB-UniRule"/>
</dbReference>
<dbReference type="GO" id="GO:0006412">
    <property type="term" value="P:translation"/>
    <property type="evidence" value="ECO:0007669"/>
    <property type="project" value="InterPro"/>
</dbReference>
<dbReference type="CDD" id="cd07026">
    <property type="entry name" value="Ribosomal_L20"/>
    <property type="match status" value="1"/>
</dbReference>
<dbReference type="FunFam" id="1.10.1900.20:FF:000001">
    <property type="entry name" value="50S ribosomal protein L20"/>
    <property type="match status" value="1"/>
</dbReference>
<dbReference type="Gene3D" id="6.10.160.10">
    <property type="match status" value="1"/>
</dbReference>
<dbReference type="Gene3D" id="1.10.1900.20">
    <property type="entry name" value="Ribosomal protein L20"/>
    <property type="match status" value="1"/>
</dbReference>
<dbReference type="HAMAP" id="MF_00382">
    <property type="entry name" value="Ribosomal_bL20"/>
    <property type="match status" value="1"/>
</dbReference>
<dbReference type="InterPro" id="IPR005813">
    <property type="entry name" value="Ribosomal_bL20"/>
</dbReference>
<dbReference type="InterPro" id="IPR049946">
    <property type="entry name" value="RIBOSOMAL_L20_CS"/>
</dbReference>
<dbReference type="InterPro" id="IPR035566">
    <property type="entry name" value="Ribosomal_protein_bL20_C"/>
</dbReference>
<dbReference type="NCBIfam" id="TIGR01032">
    <property type="entry name" value="rplT_bact"/>
    <property type="match status" value="1"/>
</dbReference>
<dbReference type="PANTHER" id="PTHR10986">
    <property type="entry name" value="39S RIBOSOMAL PROTEIN L20"/>
    <property type="match status" value="1"/>
</dbReference>
<dbReference type="Pfam" id="PF00453">
    <property type="entry name" value="Ribosomal_L20"/>
    <property type="match status" value="1"/>
</dbReference>
<dbReference type="PRINTS" id="PR00062">
    <property type="entry name" value="RIBOSOMALL20"/>
</dbReference>
<dbReference type="SUPFAM" id="SSF74731">
    <property type="entry name" value="Ribosomal protein L20"/>
    <property type="match status" value="1"/>
</dbReference>
<dbReference type="PROSITE" id="PS00937">
    <property type="entry name" value="RIBOSOMAL_L20"/>
    <property type="match status" value="1"/>
</dbReference>
<proteinExistence type="inferred from homology"/>
<protein>
    <recommendedName>
        <fullName evidence="1">Large ribosomal subunit protein bL20</fullName>
    </recommendedName>
    <alternativeName>
        <fullName evidence="2">50S ribosomal protein L20</fullName>
    </alternativeName>
</protein>